<evidence type="ECO:0000255" key="1">
    <source>
        <dbReference type="HAMAP-Rule" id="MF_01277"/>
    </source>
</evidence>
<reference key="1">
    <citation type="submission" date="2008-06" db="EMBL/GenBank/DDBJ databases">
        <title>Genome and proteome analysis of A. pleuropneumoniae serotype 7.</title>
        <authorList>
            <person name="Linke B."/>
            <person name="Buettner F."/>
            <person name="Martinez-Arias R."/>
            <person name="Goesmann A."/>
            <person name="Baltes N."/>
            <person name="Tegetmeyer H."/>
            <person name="Singh M."/>
            <person name="Gerlach G.F."/>
        </authorList>
    </citation>
    <scope>NUCLEOTIDE SEQUENCE [LARGE SCALE GENOMIC DNA]</scope>
    <source>
        <strain>AP76</strain>
    </source>
</reference>
<keyword id="KW-0238">DNA-binding</keyword>
<keyword id="KW-0658">Purine biosynthesis</keyword>
<keyword id="KW-0678">Repressor</keyword>
<keyword id="KW-0804">Transcription</keyword>
<keyword id="KW-0805">Transcription regulation</keyword>
<dbReference type="EMBL" id="CP001091">
    <property type="protein sequence ID" value="ACE61528.1"/>
    <property type="molecule type" value="Genomic_DNA"/>
</dbReference>
<dbReference type="RefSeq" id="WP_005612138.1">
    <property type="nucleotide sequence ID" value="NC_010939.1"/>
</dbReference>
<dbReference type="SMR" id="B3H1F6"/>
<dbReference type="KEGG" id="apa:APP7_0876"/>
<dbReference type="HOGENOM" id="CLU_037628_6_2_6"/>
<dbReference type="UniPathway" id="UPA00488"/>
<dbReference type="Proteomes" id="UP000001226">
    <property type="component" value="Chromosome"/>
</dbReference>
<dbReference type="GO" id="GO:0003700">
    <property type="term" value="F:DNA-binding transcription factor activity"/>
    <property type="evidence" value="ECO:0007669"/>
    <property type="project" value="TreeGrafter"/>
</dbReference>
<dbReference type="GO" id="GO:0000976">
    <property type="term" value="F:transcription cis-regulatory region binding"/>
    <property type="evidence" value="ECO:0007669"/>
    <property type="project" value="TreeGrafter"/>
</dbReference>
<dbReference type="GO" id="GO:0045892">
    <property type="term" value="P:negative regulation of DNA-templated transcription"/>
    <property type="evidence" value="ECO:0007669"/>
    <property type="project" value="UniProtKB-UniRule"/>
</dbReference>
<dbReference type="GO" id="GO:0006164">
    <property type="term" value="P:purine nucleotide biosynthetic process"/>
    <property type="evidence" value="ECO:0007669"/>
    <property type="project" value="UniProtKB-UniPathway"/>
</dbReference>
<dbReference type="CDD" id="cd01392">
    <property type="entry name" value="HTH_LacI"/>
    <property type="match status" value="1"/>
</dbReference>
<dbReference type="CDD" id="cd06275">
    <property type="entry name" value="PBP1_PurR"/>
    <property type="match status" value="1"/>
</dbReference>
<dbReference type="FunFam" id="1.10.260.40:FF:000002">
    <property type="entry name" value="HTH-type transcriptional repressor PurR"/>
    <property type="match status" value="1"/>
</dbReference>
<dbReference type="Gene3D" id="3.40.50.2300">
    <property type="match status" value="2"/>
</dbReference>
<dbReference type="Gene3D" id="1.10.260.40">
    <property type="entry name" value="lambda repressor-like DNA-binding domains"/>
    <property type="match status" value="1"/>
</dbReference>
<dbReference type="HAMAP" id="MF_01277">
    <property type="entry name" value="HTH_type_PurR"/>
    <property type="match status" value="1"/>
</dbReference>
<dbReference type="InterPro" id="IPR000843">
    <property type="entry name" value="HTH_LacI"/>
</dbReference>
<dbReference type="InterPro" id="IPR010982">
    <property type="entry name" value="Lambda_DNA-bd_dom_sf"/>
</dbReference>
<dbReference type="InterPro" id="IPR001761">
    <property type="entry name" value="Peripla_BP/Lac1_sug-bd_dom"/>
</dbReference>
<dbReference type="InterPro" id="IPR028082">
    <property type="entry name" value="Peripla_BP_I"/>
</dbReference>
<dbReference type="InterPro" id="IPR023588">
    <property type="entry name" value="Tscrpt_reg_HTH_PurR"/>
</dbReference>
<dbReference type="NCBIfam" id="NF007979">
    <property type="entry name" value="PRK10703.1"/>
    <property type="match status" value="1"/>
</dbReference>
<dbReference type="PANTHER" id="PTHR30146:SF148">
    <property type="entry name" value="HTH-TYPE TRANSCRIPTIONAL REPRESSOR PURR-RELATED"/>
    <property type="match status" value="1"/>
</dbReference>
<dbReference type="PANTHER" id="PTHR30146">
    <property type="entry name" value="LACI-RELATED TRANSCRIPTIONAL REPRESSOR"/>
    <property type="match status" value="1"/>
</dbReference>
<dbReference type="Pfam" id="PF00356">
    <property type="entry name" value="LacI"/>
    <property type="match status" value="1"/>
</dbReference>
<dbReference type="Pfam" id="PF00532">
    <property type="entry name" value="Peripla_BP_1"/>
    <property type="match status" value="1"/>
</dbReference>
<dbReference type="PRINTS" id="PR00036">
    <property type="entry name" value="HTHLACI"/>
</dbReference>
<dbReference type="SMART" id="SM00354">
    <property type="entry name" value="HTH_LACI"/>
    <property type="match status" value="1"/>
</dbReference>
<dbReference type="SUPFAM" id="SSF47413">
    <property type="entry name" value="lambda repressor-like DNA-binding domains"/>
    <property type="match status" value="1"/>
</dbReference>
<dbReference type="SUPFAM" id="SSF53822">
    <property type="entry name" value="Periplasmic binding protein-like I"/>
    <property type="match status" value="1"/>
</dbReference>
<dbReference type="PROSITE" id="PS00356">
    <property type="entry name" value="HTH_LACI_1"/>
    <property type="match status" value="1"/>
</dbReference>
<dbReference type="PROSITE" id="PS50932">
    <property type="entry name" value="HTH_LACI_2"/>
    <property type="match status" value="1"/>
</dbReference>
<proteinExistence type="inferred from homology"/>
<organism>
    <name type="scientific">Actinobacillus pleuropneumoniae serotype 7 (strain AP76)</name>
    <dbReference type="NCBI Taxonomy" id="537457"/>
    <lineage>
        <taxon>Bacteria</taxon>
        <taxon>Pseudomonadati</taxon>
        <taxon>Pseudomonadota</taxon>
        <taxon>Gammaproteobacteria</taxon>
        <taxon>Pasteurellales</taxon>
        <taxon>Pasteurellaceae</taxon>
        <taxon>Actinobacillus</taxon>
    </lineage>
</organism>
<sequence length="336" mass="37831">MATIKDVAKLAGVSTTTVSHVINKTRFVAEDTSKAVWDAIQQLNYSPSAVARSLKVNTTKSIGMIITTSEAPYFAEIVLAVEEHCYQQGYSLFLCNTQNEPEKIQNHLDMLIKKRVDGVLVMCSEYTRDSLELFNGTNIPMVVMDWGKADDHSDRILDNSFEGGYLATQHLIENGHKDIGVIAGHLSKTLSKERYEGFLKAMHEANLPVRQEWIYEGDFEPESGFEQMNNLLRLEKLPTAIFCFSDTIALGAISALSEKGLSVPSYMSIIGYDNIHSSRFYSPPLTTIHQSKSRLGVKALNILLERIKIDKTQYQPQTIEFHPELVLRRSVRNLNK</sequence>
<accession>B3H1F6</accession>
<protein>
    <recommendedName>
        <fullName evidence="1">HTH-type transcriptional repressor PurR</fullName>
    </recommendedName>
    <alternativeName>
        <fullName evidence="1">Pur regulon repressor</fullName>
    </alternativeName>
    <alternativeName>
        <fullName evidence="1">Purine nucleotide synthesis repressor</fullName>
    </alternativeName>
</protein>
<gene>
    <name evidence="1" type="primary">purR</name>
    <name type="ordered locus">APP7_0876</name>
</gene>
<feature type="chain" id="PRO_1000140283" description="HTH-type transcriptional repressor PurR">
    <location>
        <begin position="1"/>
        <end position="336"/>
    </location>
</feature>
<feature type="domain" description="HTH lacI-type" evidence="1">
    <location>
        <begin position="2"/>
        <end position="56"/>
    </location>
</feature>
<feature type="DNA-binding region" description="H-T-H motif" evidence="1">
    <location>
        <begin position="4"/>
        <end position="23"/>
    </location>
</feature>
<feature type="DNA-binding region" evidence="1">
    <location>
        <begin position="48"/>
        <end position="56"/>
    </location>
</feature>
<feature type="binding site" evidence="1">
    <location>
        <position position="73"/>
    </location>
    <ligand>
        <name>hypoxanthine</name>
        <dbReference type="ChEBI" id="CHEBI:17368"/>
    </ligand>
</feature>
<feature type="binding site" evidence="1">
    <location>
        <position position="188"/>
    </location>
    <ligand>
        <name>hypoxanthine</name>
        <dbReference type="ChEBI" id="CHEBI:17368"/>
    </ligand>
</feature>
<feature type="binding site" evidence="1">
    <location>
        <position position="219"/>
    </location>
    <ligand>
        <name>hypoxanthine</name>
        <dbReference type="ChEBI" id="CHEBI:17368"/>
    </ligand>
</feature>
<feature type="binding site" evidence="1">
    <location>
        <position position="273"/>
    </location>
    <ligand>
        <name>hypoxanthine</name>
        <dbReference type="ChEBI" id="CHEBI:17368"/>
    </ligand>
</feature>
<name>PURR_ACTP7</name>
<comment type="function">
    <text evidence="1">Is the main repressor of the genes involved in the de novo synthesis of purine nucleotides, regulating purB, purC, purEK, purF, purHD, purL, purMN and guaBA expression. PurR is allosterically activated to bind its cognate DNA by binding the purine corepressors, hypoxanthine or guanine, thereby effecting transcription repression.</text>
</comment>
<comment type="pathway">
    <text>Purine metabolism; purine nucleotide biosynthesis [regulation].</text>
</comment>
<comment type="subunit">
    <text evidence="1">Homodimer.</text>
</comment>
<comment type="domain">
    <text evidence="1">Consists of two structural and functional domains: an N-terminal DNA-binding domain, approximately the first 60 residues, and a larger C-terminal domain, approximately 280 residues, which imparts the function of corepressor binding and oligomerization.</text>
</comment>